<comment type="function">
    <text evidence="1">Potent transcriptional repressor that binds to the H1 element of the Ets2 promoter. May regulate other genes involved in cellular proliferation. Required for extraembryonic ectoderm differentiation, ectoplacental cone cavity closure, and chorioallantoic attachment (By similarity). May be important for regulating trophoblast stem cell differentiation (By similarity).</text>
</comment>
<comment type="interaction">
    <interactant intactId="EBI-8465203">
        <id>P50548</id>
    </interactant>
    <interactant intactId="EBI-348259">
        <id>Q96EZ8</id>
        <label>MCRS1</label>
    </interactant>
    <organismsDiffer>false</organismsDiffer>
    <experiments>3</experiments>
</comment>
<comment type="interaction">
    <interactant intactId="EBI-8465203">
        <id>P50548</id>
    </interactant>
    <interactant intactId="EBI-16439278">
        <id>Q6FHY5</id>
        <label>MEOX2</label>
    </interactant>
    <organismsDiffer>false</organismsDiffer>
    <experiments>3</experiments>
</comment>
<comment type="interaction">
    <interactant intactId="EBI-8465203">
        <id>P50548</id>
    </interactant>
    <interactant intactId="EBI-11741437">
        <id>Q08117-2</id>
        <label>TLE5</label>
    </interactant>
    <organismsDiffer>false</organismsDiffer>
    <experiments>3</experiments>
</comment>
<comment type="interaction">
    <interactant intactId="EBI-8465203">
        <id>P50548</id>
    </interactant>
    <interactant intactId="EBI-527853">
        <id>Q9UGI0</id>
        <label>ZRANB1</label>
    </interactant>
    <organismsDiffer>false</organismsDiffer>
    <experiments>3</experiments>
</comment>
<comment type="subcellular location">
    <subcellularLocation>
        <location>Nucleus</location>
    </subcellularLocation>
</comment>
<comment type="alternative products">
    <event type="alternative splicing"/>
    <isoform>
        <id>P50548-1</id>
        <name>1</name>
        <sequence type="displayed"/>
    </isoform>
    <isoform>
        <id>P50548-2</id>
        <name>2</name>
        <sequence type="described" ref="VSP_055487"/>
    </isoform>
</comment>
<comment type="tissue specificity">
    <text evidence="7">Highest levels in testis, ovary, pancreas, and heart.</text>
</comment>
<comment type="PTM">
    <text evidence="6 8">Phosphorylated by multiple kinases including MAPK1/ERK2 at THR-526. Phosphorylation regulates the activity of ERF.</text>
</comment>
<comment type="disease" evidence="4">
    <disease id="DI-03809">
        <name>Craniosynostosis 4</name>
        <acronym>CRS4</acronym>
        <description>A primary abnormality of skull growth involving premature fusion of one or more cranial sutures. The growth velocity of the skull often cannot match that of the developing brain resulting in an abnormal head shape and, in some cases, increased intracranial pressure, which must be treated promptly to avoid permanent neurodevelopmental disability.</description>
        <dbReference type="MIM" id="600775"/>
    </disease>
    <text>The disease is caused by variants affecting the gene represented in this entry.</text>
</comment>
<comment type="disease" evidence="5">
    <disease id="DI-04884">
        <name>Chitayat syndrome</name>
        <acronym>CHYTS</acronym>
        <description>An autosomal dominant syndrome characterized by hyperphalangism, partial syndactyly, bilateral accessory phalanx resulting in shortened index fingers, hallux valgus, brachydactyly, facial anomalies, diffuse bronchomalacia, and respiratory distress at birth and in infancy.</description>
        <dbReference type="MIM" id="617180"/>
    </disease>
    <text>The disease is caused by variants affecting the gene represented in this entry.</text>
</comment>
<comment type="similarity">
    <text evidence="10">Belongs to the ETS family.</text>
</comment>
<comment type="sequence caution" evidence="10">
    <conflict type="miscellaneous discrepancy">
        <sequence resource="EMBL-CDS" id="BAD92508"/>
    </conflict>
    <text>The sequence differs from that shown because it seems to be derived from a pre-mRNA.</text>
</comment>
<evidence type="ECO:0000250" key="1"/>
<evidence type="ECO:0000255" key="2">
    <source>
        <dbReference type="PROSITE-ProRule" id="PRU00237"/>
    </source>
</evidence>
<evidence type="ECO:0000256" key="3">
    <source>
        <dbReference type="SAM" id="MobiDB-lite"/>
    </source>
</evidence>
<evidence type="ECO:0000269" key="4">
    <source>
    </source>
</evidence>
<evidence type="ECO:0000269" key="5">
    <source>
    </source>
</evidence>
<evidence type="ECO:0000269" key="6">
    <source>
    </source>
</evidence>
<evidence type="ECO:0000269" key="7">
    <source>
    </source>
</evidence>
<evidence type="ECO:0000269" key="8">
    <source ref="7"/>
</evidence>
<evidence type="ECO:0000303" key="9">
    <source>
    </source>
</evidence>
<evidence type="ECO:0000305" key="10"/>
<evidence type="ECO:0007744" key="11">
    <source>
    </source>
</evidence>
<evidence type="ECO:0007744" key="12">
    <source>
    </source>
</evidence>
<evidence type="ECO:0007744" key="13">
    <source>
    </source>
</evidence>
<evidence type="ECO:0007744" key="14">
    <source>
    </source>
</evidence>
<evidence type="ECO:0007744" key="15">
    <source>
    </source>
</evidence>
<evidence type="ECO:0007744" key="16">
    <source>
    </source>
</evidence>
<evidence type="ECO:0007744" key="17">
    <source>
    </source>
</evidence>
<evidence type="ECO:0007829" key="18">
    <source>
        <dbReference type="PDB" id="7JSA"/>
    </source>
</evidence>
<name>ERF_HUMAN</name>
<proteinExistence type="evidence at protein level"/>
<reference key="1">
    <citation type="journal article" date="1995" name="EMBO J.">
        <title>ERF: an ETS domain protein with strong transcriptional repressor activity, can suppress ets-associated tumorigenesis and is regulated by phosphorylation during cell cycle and mitogenic stimulation.</title>
        <authorList>
            <person name="Sgouras D.N."/>
            <person name="Athanasiou M.A."/>
            <person name="Beal G.J. Jr."/>
            <person name="Fisher R.J."/>
            <person name="Blair D.G."/>
            <person name="Mavrothalassitis G.J."/>
        </authorList>
    </citation>
    <scope>NUCLEOTIDE SEQUENCE [MRNA] (ISOFORM 1)</scope>
    <scope>PHOSPHORYLATION AT THR-526</scope>
    <scope>MUTAGENESIS OF THR-526</scope>
</reference>
<reference key="2">
    <citation type="journal article" date="2004" name="Nat. Genet.">
        <title>Complete sequencing and characterization of 21,243 full-length human cDNAs.</title>
        <authorList>
            <person name="Ota T."/>
            <person name="Suzuki Y."/>
            <person name="Nishikawa T."/>
            <person name="Otsuki T."/>
            <person name="Sugiyama T."/>
            <person name="Irie R."/>
            <person name="Wakamatsu A."/>
            <person name="Hayashi K."/>
            <person name="Sato H."/>
            <person name="Nagai K."/>
            <person name="Kimura K."/>
            <person name="Makita H."/>
            <person name="Sekine M."/>
            <person name="Obayashi M."/>
            <person name="Nishi T."/>
            <person name="Shibahara T."/>
            <person name="Tanaka T."/>
            <person name="Ishii S."/>
            <person name="Yamamoto J."/>
            <person name="Saito K."/>
            <person name="Kawai Y."/>
            <person name="Isono Y."/>
            <person name="Nakamura Y."/>
            <person name="Nagahari K."/>
            <person name="Murakami K."/>
            <person name="Yasuda T."/>
            <person name="Iwayanagi T."/>
            <person name="Wagatsuma M."/>
            <person name="Shiratori A."/>
            <person name="Sudo H."/>
            <person name="Hosoiri T."/>
            <person name="Kaku Y."/>
            <person name="Kodaira H."/>
            <person name="Kondo H."/>
            <person name="Sugawara M."/>
            <person name="Takahashi M."/>
            <person name="Kanda K."/>
            <person name="Yokoi T."/>
            <person name="Furuya T."/>
            <person name="Kikkawa E."/>
            <person name="Omura Y."/>
            <person name="Abe K."/>
            <person name="Kamihara K."/>
            <person name="Katsuta N."/>
            <person name="Sato K."/>
            <person name="Tanikawa M."/>
            <person name="Yamazaki M."/>
            <person name="Ninomiya K."/>
            <person name="Ishibashi T."/>
            <person name="Yamashita H."/>
            <person name="Murakawa K."/>
            <person name="Fujimori K."/>
            <person name="Tanai H."/>
            <person name="Kimata M."/>
            <person name="Watanabe M."/>
            <person name="Hiraoka S."/>
            <person name="Chiba Y."/>
            <person name="Ishida S."/>
            <person name="Ono Y."/>
            <person name="Takiguchi S."/>
            <person name="Watanabe S."/>
            <person name="Yosida M."/>
            <person name="Hotuta T."/>
            <person name="Kusano J."/>
            <person name="Kanehori K."/>
            <person name="Takahashi-Fujii A."/>
            <person name="Hara H."/>
            <person name="Tanase T.-O."/>
            <person name="Nomura Y."/>
            <person name="Togiya S."/>
            <person name="Komai F."/>
            <person name="Hara R."/>
            <person name="Takeuchi K."/>
            <person name="Arita M."/>
            <person name="Imose N."/>
            <person name="Musashino K."/>
            <person name="Yuuki H."/>
            <person name="Oshima A."/>
            <person name="Sasaki N."/>
            <person name="Aotsuka S."/>
            <person name="Yoshikawa Y."/>
            <person name="Matsunawa H."/>
            <person name="Ichihara T."/>
            <person name="Shiohata N."/>
            <person name="Sano S."/>
            <person name="Moriya S."/>
            <person name="Momiyama H."/>
            <person name="Satoh N."/>
            <person name="Takami S."/>
            <person name="Terashima Y."/>
            <person name="Suzuki O."/>
            <person name="Nakagawa S."/>
            <person name="Senoh A."/>
            <person name="Mizoguchi H."/>
            <person name="Goto Y."/>
            <person name="Shimizu F."/>
            <person name="Wakebe H."/>
            <person name="Hishigaki H."/>
            <person name="Watanabe T."/>
            <person name="Sugiyama A."/>
            <person name="Takemoto M."/>
            <person name="Kawakami B."/>
            <person name="Yamazaki M."/>
            <person name="Watanabe K."/>
            <person name="Kumagai A."/>
            <person name="Itakura S."/>
            <person name="Fukuzumi Y."/>
            <person name="Fujimori Y."/>
            <person name="Komiyama M."/>
            <person name="Tashiro H."/>
            <person name="Tanigami A."/>
            <person name="Fujiwara T."/>
            <person name="Ono T."/>
            <person name="Yamada K."/>
            <person name="Fujii Y."/>
            <person name="Ozaki K."/>
            <person name="Hirao M."/>
            <person name="Ohmori Y."/>
            <person name="Kawabata A."/>
            <person name="Hikiji T."/>
            <person name="Kobatake N."/>
            <person name="Inagaki H."/>
            <person name="Ikema Y."/>
            <person name="Okamoto S."/>
            <person name="Okitani R."/>
            <person name="Kawakami T."/>
            <person name="Noguchi S."/>
            <person name="Itoh T."/>
            <person name="Shigeta K."/>
            <person name="Senba T."/>
            <person name="Matsumura K."/>
            <person name="Nakajima Y."/>
            <person name="Mizuno T."/>
            <person name="Morinaga M."/>
            <person name="Sasaki M."/>
            <person name="Togashi T."/>
            <person name="Oyama M."/>
            <person name="Hata H."/>
            <person name="Watanabe M."/>
            <person name="Komatsu T."/>
            <person name="Mizushima-Sugano J."/>
            <person name="Satoh T."/>
            <person name="Shirai Y."/>
            <person name="Takahashi Y."/>
            <person name="Nakagawa K."/>
            <person name="Okumura K."/>
            <person name="Nagase T."/>
            <person name="Nomura N."/>
            <person name="Kikuchi H."/>
            <person name="Masuho Y."/>
            <person name="Yamashita R."/>
            <person name="Nakai K."/>
            <person name="Yada T."/>
            <person name="Nakamura Y."/>
            <person name="Ohara O."/>
            <person name="Isogai T."/>
            <person name="Sugano S."/>
        </authorList>
    </citation>
    <scope>NUCLEOTIDE SEQUENCE [LARGE SCALE MRNA] (ISOFORMS 1 AND 2)</scope>
    <source>
        <tissue>Heart</tissue>
    </source>
</reference>
<reference key="3">
    <citation type="submission" date="2005-03" db="EMBL/GenBank/DDBJ databases">
        <authorList>
            <person name="Totoki Y."/>
            <person name="Toyoda A."/>
            <person name="Takeda T."/>
            <person name="Sakaki Y."/>
            <person name="Tanaka A."/>
            <person name="Yokoyama S."/>
            <person name="Ohara O."/>
            <person name="Nagase T."/>
            <person name="Kikuno R.F."/>
        </authorList>
    </citation>
    <scope>NUCLEOTIDE SEQUENCE [LARGE SCALE MRNA] (ISOFORM 1)</scope>
    <source>
        <tissue>Brain</tissue>
    </source>
</reference>
<reference key="4">
    <citation type="journal article" date="2004" name="Nature">
        <title>The DNA sequence and biology of human chromosome 19.</title>
        <authorList>
            <person name="Grimwood J."/>
            <person name="Gordon L.A."/>
            <person name="Olsen A.S."/>
            <person name="Terry A."/>
            <person name="Schmutz J."/>
            <person name="Lamerdin J.E."/>
            <person name="Hellsten U."/>
            <person name="Goodstein D."/>
            <person name="Couronne O."/>
            <person name="Tran-Gyamfi M."/>
            <person name="Aerts A."/>
            <person name="Altherr M."/>
            <person name="Ashworth L."/>
            <person name="Bajorek E."/>
            <person name="Black S."/>
            <person name="Branscomb E."/>
            <person name="Caenepeel S."/>
            <person name="Carrano A.V."/>
            <person name="Caoile C."/>
            <person name="Chan Y.M."/>
            <person name="Christensen M."/>
            <person name="Cleland C.A."/>
            <person name="Copeland A."/>
            <person name="Dalin E."/>
            <person name="Dehal P."/>
            <person name="Denys M."/>
            <person name="Detter J.C."/>
            <person name="Escobar J."/>
            <person name="Flowers D."/>
            <person name="Fotopulos D."/>
            <person name="Garcia C."/>
            <person name="Georgescu A.M."/>
            <person name="Glavina T."/>
            <person name="Gomez M."/>
            <person name="Gonzales E."/>
            <person name="Groza M."/>
            <person name="Hammon N."/>
            <person name="Hawkins T."/>
            <person name="Haydu L."/>
            <person name="Ho I."/>
            <person name="Huang W."/>
            <person name="Israni S."/>
            <person name="Jett J."/>
            <person name="Kadner K."/>
            <person name="Kimball H."/>
            <person name="Kobayashi A."/>
            <person name="Larionov V."/>
            <person name="Leem S.-H."/>
            <person name="Lopez F."/>
            <person name="Lou Y."/>
            <person name="Lowry S."/>
            <person name="Malfatti S."/>
            <person name="Martinez D."/>
            <person name="McCready P.M."/>
            <person name="Medina C."/>
            <person name="Morgan J."/>
            <person name="Nelson K."/>
            <person name="Nolan M."/>
            <person name="Ovcharenko I."/>
            <person name="Pitluck S."/>
            <person name="Pollard M."/>
            <person name="Popkie A.P."/>
            <person name="Predki P."/>
            <person name="Quan G."/>
            <person name="Ramirez L."/>
            <person name="Rash S."/>
            <person name="Retterer J."/>
            <person name="Rodriguez A."/>
            <person name="Rogers S."/>
            <person name="Salamov A."/>
            <person name="Salazar A."/>
            <person name="She X."/>
            <person name="Smith D."/>
            <person name="Slezak T."/>
            <person name="Solovyev V."/>
            <person name="Thayer N."/>
            <person name="Tice H."/>
            <person name="Tsai M."/>
            <person name="Ustaszewska A."/>
            <person name="Vo N."/>
            <person name="Wagner M."/>
            <person name="Wheeler J."/>
            <person name="Wu K."/>
            <person name="Xie G."/>
            <person name="Yang J."/>
            <person name="Dubchak I."/>
            <person name="Furey T.S."/>
            <person name="DeJong P."/>
            <person name="Dickson M."/>
            <person name="Gordon D."/>
            <person name="Eichler E.E."/>
            <person name="Pennacchio L.A."/>
            <person name="Richardson P."/>
            <person name="Stubbs L."/>
            <person name="Rokhsar D.S."/>
            <person name="Myers R.M."/>
            <person name="Rubin E.M."/>
            <person name="Lucas S.M."/>
        </authorList>
    </citation>
    <scope>NUCLEOTIDE SEQUENCE [LARGE SCALE GENOMIC DNA]</scope>
</reference>
<reference key="5">
    <citation type="submission" date="2005-07" db="EMBL/GenBank/DDBJ databases">
        <authorList>
            <person name="Mural R.J."/>
            <person name="Istrail S."/>
            <person name="Sutton G.G."/>
            <person name="Florea L."/>
            <person name="Halpern A.L."/>
            <person name="Mobarry C.M."/>
            <person name="Lippert R."/>
            <person name="Walenz B."/>
            <person name="Shatkay H."/>
            <person name="Dew I."/>
            <person name="Miller J.R."/>
            <person name="Flanigan M.J."/>
            <person name="Edwards N.J."/>
            <person name="Bolanos R."/>
            <person name="Fasulo D."/>
            <person name="Halldorsson B.V."/>
            <person name="Hannenhalli S."/>
            <person name="Turner R."/>
            <person name="Yooseph S."/>
            <person name="Lu F."/>
            <person name="Nusskern D.R."/>
            <person name="Shue B.C."/>
            <person name="Zheng X.H."/>
            <person name="Zhong F."/>
            <person name="Delcher A.L."/>
            <person name="Huson D.H."/>
            <person name="Kravitz S.A."/>
            <person name="Mouchard L."/>
            <person name="Reinert K."/>
            <person name="Remington K.A."/>
            <person name="Clark A.G."/>
            <person name="Waterman M.S."/>
            <person name="Eichler E.E."/>
            <person name="Adams M.D."/>
            <person name="Hunkapiller M.W."/>
            <person name="Myers E.W."/>
            <person name="Venter J.C."/>
        </authorList>
    </citation>
    <scope>NUCLEOTIDE SEQUENCE [LARGE SCALE GENOMIC DNA]</scope>
</reference>
<reference key="6">
    <citation type="journal article" date="2004" name="Genome Res.">
        <title>The status, quality, and expansion of the NIH full-length cDNA project: the Mammalian Gene Collection (MGC).</title>
        <authorList>
            <consortium name="The MGC Project Team"/>
        </authorList>
    </citation>
    <scope>NUCLEOTIDE SEQUENCE [LARGE SCALE MRNA] (ISOFORM 1)</scope>
    <source>
        <tissue>Duodenum</tissue>
    </source>
</reference>
<reference key="7">
    <citation type="submission" date="2009-10" db="UniProtKB">
        <authorList>
            <person name="Bienvenut W.V."/>
            <person name="Lempens A."/>
            <person name="Norman J.C."/>
        </authorList>
    </citation>
    <scope>PROTEIN SEQUENCE OF 102-110; 206-218; 313-347; 377-386; 402-426 AND 515-528</scope>
    <scope>PHOSPHORYLATION AT SER-327</scope>
    <scope>IDENTIFICATION BY MASS SPECTROMETRY</scope>
    <source>
        <tissue>Ovarian carcinoma</tissue>
    </source>
</reference>
<reference key="8">
    <citation type="journal article" date="1997" name="Genomics">
        <title>Genomic structure and chromosomal localization of the novel ETS factor, PE-2 (ERF).</title>
        <authorList>
            <person name="de Castro C.M."/>
            <person name="Rabe S.M."/>
            <person name="Langdon S.D."/>
            <person name="Fleenor D.E."/>
            <person name="Slentz-Kesler K."/>
            <person name="Ahmed M.N."/>
            <person name="Qumsiyeh M.B."/>
            <person name="Kaufman R.E."/>
        </authorList>
    </citation>
    <scope>TISSUE SPECIFICITY</scope>
</reference>
<reference key="9">
    <citation type="journal article" date="2006" name="Cell">
        <title>Global, in vivo, and site-specific phosphorylation dynamics in signaling networks.</title>
        <authorList>
            <person name="Olsen J.V."/>
            <person name="Blagoev B."/>
            <person name="Gnad F."/>
            <person name="Macek B."/>
            <person name="Kumar C."/>
            <person name="Mortensen P."/>
            <person name="Mann M."/>
        </authorList>
    </citation>
    <scope>PHOSPHORYLATION [LARGE SCALE ANALYSIS] AT SER-190</scope>
    <scope>IDENTIFICATION BY MASS SPECTROMETRY [LARGE SCALE ANALYSIS]</scope>
    <source>
        <tissue>Cervix carcinoma</tissue>
    </source>
</reference>
<reference key="10">
    <citation type="journal article" date="2008" name="Proc. Natl. Acad. Sci. U.S.A.">
        <title>A quantitative atlas of mitotic phosphorylation.</title>
        <authorList>
            <person name="Dephoure N."/>
            <person name="Zhou C."/>
            <person name="Villen J."/>
            <person name="Beausoleil S.A."/>
            <person name="Bakalarski C.E."/>
            <person name="Elledge S.J."/>
            <person name="Gygi S.P."/>
        </authorList>
    </citation>
    <scope>PHOSPHORYLATION [LARGE SCALE ANALYSIS] AT THR-3; THR-7; SER-20; SER-185; SER-327; SER-431; SER-435; THR-441; SER-444; SER-531 AND SER-548</scope>
    <scope>IDENTIFICATION BY MASS SPECTROMETRY [LARGE SCALE ANALYSIS]</scope>
    <source>
        <tissue>Cervix carcinoma</tissue>
    </source>
</reference>
<reference key="11">
    <citation type="journal article" date="2009" name="Sci. Signal.">
        <title>Quantitative phosphoproteomic analysis of T cell receptor signaling reveals system-wide modulation of protein-protein interactions.</title>
        <authorList>
            <person name="Mayya V."/>
            <person name="Lundgren D.H."/>
            <person name="Hwang S.-I."/>
            <person name="Rezaul K."/>
            <person name="Wu L."/>
            <person name="Eng J.K."/>
            <person name="Rodionov V."/>
            <person name="Han D.K."/>
        </authorList>
    </citation>
    <scope>PHOSPHORYLATION [LARGE SCALE ANALYSIS] AT SER-431; SER-444 AND THR-526</scope>
    <scope>IDENTIFICATION BY MASS SPECTROMETRY [LARGE SCALE ANALYSIS]</scope>
    <source>
        <tissue>Leukemic T-cell</tissue>
    </source>
</reference>
<reference key="12">
    <citation type="journal article" date="2011" name="Sci. Signal.">
        <title>System-wide temporal characterization of the proteome and phosphoproteome of human embryonic stem cell differentiation.</title>
        <authorList>
            <person name="Rigbolt K.T."/>
            <person name="Prokhorova T.A."/>
            <person name="Akimov V."/>
            <person name="Henningsen J."/>
            <person name="Johansen P.T."/>
            <person name="Kratchmarova I."/>
            <person name="Kassem M."/>
            <person name="Mann M."/>
            <person name="Olsen J.V."/>
            <person name="Blagoev B."/>
        </authorList>
    </citation>
    <scope>IDENTIFICATION BY MASS SPECTROMETRY [LARGE SCALE ANALYSIS]</scope>
</reference>
<reference key="13">
    <citation type="journal article" date="2013" name="J. Proteome Res.">
        <title>Toward a comprehensive characterization of a human cancer cell phosphoproteome.</title>
        <authorList>
            <person name="Zhou H."/>
            <person name="Di Palma S."/>
            <person name="Preisinger C."/>
            <person name="Peng M."/>
            <person name="Polat A.N."/>
            <person name="Heck A.J."/>
            <person name="Mohammed S."/>
        </authorList>
    </citation>
    <scope>PHOSPHORYLATION [LARGE SCALE ANALYSIS] AT SER-24; SER-185; SER-327; THR-526; SER-531 AND SER-532</scope>
    <scope>IDENTIFICATION BY MASS SPECTROMETRY [LARGE SCALE ANALYSIS]</scope>
    <source>
        <tissue>Cervix carcinoma</tissue>
        <tissue>Erythroleukemia</tissue>
    </source>
</reference>
<reference key="14">
    <citation type="journal article" date="2014" name="J. Proteomics">
        <title>An enzyme assisted RP-RPLC approach for in-depth analysis of human liver phosphoproteome.</title>
        <authorList>
            <person name="Bian Y."/>
            <person name="Song C."/>
            <person name="Cheng K."/>
            <person name="Dong M."/>
            <person name="Wang F."/>
            <person name="Huang J."/>
            <person name="Sun D."/>
            <person name="Wang L."/>
            <person name="Ye M."/>
            <person name="Zou H."/>
        </authorList>
    </citation>
    <scope>PHOSPHORYLATION [LARGE SCALE ANALYSIS] AT THR-526</scope>
    <scope>IDENTIFICATION BY MASS SPECTROMETRY [LARGE SCALE ANALYSIS]</scope>
    <source>
        <tissue>Liver</tissue>
    </source>
</reference>
<reference key="15">
    <citation type="journal article" date="2014" name="Nat. Struct. Mol. Biol.">
        <title>Uncovering global SUMOylation signaling networks in a site-specific manner.</title>
        <authorList>
            <person name="Hendriks I.A."/>
            <person name="D'Souza R.C."/>
            <person name="Yang B."/>
            <person name="Verlaan-de Vries M."/>
            <person name="Mann M."/>
            <person name="Vertegaal A.C."/>
        </authorList>
    </citation>
    <scope>SUMOYLATION [LARGE SCALE ANALYSIS] AT LYS-465 AND LYS-512</scope>
    <scope>IDENTIFICATION BY MASS SPECTROMETRY [LARGE SCALE ANALYSIS]</scope>
</reference>
<reference key="16">
    <citation type="journal article" date="2017" name="Nat. Struct. Mol. Biol.">
        <title>Site-specific mapping of the human SUMO proteome reveals co-modification with phosphorylation.</title>
        <authorList>
            <person name="Hendriks I.A."/>
            <person name="Lyon D."/>
            <person name="Young C."/>
            <person name="Jensen L.J."/>
            <person name="Vertegaal A.C."/>
            <person name="Nielsen M.L."/>
        </authorList>
    </citation>
    <scope>SUMOYLATION [LARGE SCALE ANALYSIS] AT LYS-465; LYS-481 AND LYS-512</scope>
    <scope>IDENTIFICATION BY MASS SPECTROMETRY [LARGE SCALE ANALYSIS]</scope>
</reference>
<reference key="17">
    <citation type="journal article" date="2013" name="Nat. Genet.">
        <title>Reduced dosage of ERF causes complex craniosynostosis in humans and mice and links ERK1/2 signaling to regulation of osteogenesis.</title>
        <authorList>
            <person name="Twigg S.R."/>
            <person name="Vorgia E."/>
            <person name="McGowan S.J."/>
            <person name="Peraki I."/>
            <person name="Fenwick A.L."/>
            <person name="Sharma V.P."/>
            <person name="Allegra M."/>
            <person name="Zaragkoulias A."/>
            <person name="Sadighi Akha E."/>
            <person name="Knight S.J."/>
            <person name="Lord H."/>
            <person name="Lester T."/>
            <person name="Izatt L."/>
            <person name="Lampe A.K."/>
            <person name="Mohammed S.N."/>
            <person name="Stewart F.J."/>
            <person name="Verloes A."/>
            <person name="Wilson L.C."/>
            <person name="Healy C."/>
            <person name="Sharpe P.T."/>
            <person name="Hammond P."/>
            <person name="Hughes J."/>
            <person name="Taylor S."/>
            <person name="Johnson D."/>
            <person name="Wall S.A."/>
            <person name="Mavrothalassitis G."/>
            <person name="Wilkie A.O."/>
        </authorList>
    </citation>
    <scope>VARIANTS CRS4 GLN-65 AND CYS-86</scope>
</reference>
<reference key="18">
    <citation type="journal article" date="2017" name="J. Med. Genet.">
        <title>Chitayat syndrome: hyperphalangism, characteristic facies, hallux valgus and bronchomalacia results from a recurrent c.266A&gt;G p.(Tyr89Cys) variant in the ERF gene.</title>
        <authorList>
            <consortium name="DDD Study"/>
            <person name="Balasubramanian M."/>
            <person name="Lord H."/>
            <person name="Levesque S."/>
            <person name="Guturu H."/>
            <person name="Thuriot F."/>
            <person name="Sillon G."/>
            <person name="Wenger A.M."/>
            <person name="Sureka D.L."/>
            <person name="Lester T."/>
            <person name="Johnson D.S."/>
            <person name="Bowen J."/>
            <person name="Calhoun A.R."/>
            <person name="Viskochil D.H."/>
            <person name="Bejerano G."/>
            <person name="Bernstein J.A."/>
            <person name="Chitayat D."/>
        </authorList>
    </citation>
    <scope>INVOLVEMENT IN CHYTS</scope>
    <scope>VARIANT CHYTS CYS-89</scope>
</reference>
<gene>
    <name type="primary">ERF</name>
</gene>
<accession>P50548</accession>
<accession>B2RAP1</accession>
<accession>B7Z4R0</accession>
<accession>Q59G38</accession>
<accession>Q9UPI7</accession>
<sequence length="548" mass="58703">MKTPADTGFAFPDWAYKPESSPGSRQIQLWHFILELLRKEEYQGVIAWQGDYGEFVIKDPDEVARLWGVRKCKPQMNYDKLSRALRYYYNKRILHKTKGKRFTYKFNFNKLVLVNYPFIDVGLAGGAVPQSAPPVPSGGSHFRFPPSTPSEVLSPTEDPRSPPACSSSSSSLFSAVVARRLGRGSVSDCSDGTSELEEPLGEDPRARPPGPPDLGAFRGPPLARLPHDPGVFRVYPRPRGGPEPLSPFPVSPLAGPGSLLPPQLSPALPMTPTHLAYTPSPTLSPMYPSGGGGPSGSGGGSHFSFSPEDMKRYLQAHTQSVYNYHLSPRAFLHYPGLVVPQPQRPDKCPLPPMAPETPPVPSSASSSSSSSSSPFKFKLQPPPLGRRQRAAGEKAVAGADKSGGSAGGLAEGAGALAPPPPPPQIKVEPISEGESEEVEVTDISDEDEEDGEVFKTPRAPPAPPKPEPGEAPGASQCMPLKLRFKRRWSEDCRLEGGGGPAGGFEDEGEDKKVRGEGPGEAGGPLTPRRVSSDLQHATAQLSLEHRDS</sequence>
<keyword id="KW-0002">3D-structure</keyword>
<keyword id="KW-0025">Alternative splicing</keyword>
<keyword id="KW-0989">Craniosynostosis</keyword>
<keyword id="KW-0903">Direct protein sequencing</keyword>
<keyword id="KW-0225">Disease variant</keyword>
<keyword id="KW-0238">DNA-binding</keyword>
<keyword id="KW-1017">Isopeptide bond</keyword>
<keyword id="KW-0539">Nucleus</keyword>
<keyword id="KW-0597">Phosphoprotein</keyword>
<keyword id="KW-1267">Proteomics identification</keyword>
<keyword id="KW-1185">Reference proteome</keyword>
<keyword id="KW-0678">Repressor</keyword>
<keyword id="KW-0804">Transcription</keyword>
<keyword id="KW-0805">Transcription regulation</keyword>
<keyword id="KW-0832">Ubl conjugation</keyword>
<organism>
    <name type="scientific">Homo sapiens</name>
    <name type="common">Human</name>
    <dbReference type="NCBI Taxonomy" id="9606"/>
    <lineage>
        <taxon>Eukaryota</taxon>
        <taxon>Metazoa</taxon>
        <taxon>Chordata</taxon>
        <taxon>Craniata</taxon>
        <taxon>Vertebrata</taxon>
        <taxon>Euteleostomi</taxon>
        <taxon>Mammalia</taxon>
        <taxon>Eutheria</taxon>
        <taxon>Euarchontoglires</taxon>
        <taxon>Primates</taxon>
        <taxon>Haplorrhini</taxon>
        <taxon>Catarrhini</taxon>
        <taxon>Hominidae</taxon>
        <taxon>Homo</taxon>
    </lineage>
</organism>
<protein>
    <recommendedName>
        <fullName>ETS domain-containing transcription factor ERF</fullName>
    </recommendedName>
    <alternativeName>
        <fullName>Ets2 repressor factor</fullName>
    </alternativeName>
    <alternativeName>
        <fullName>PE-2</fullName>
    </alternativeName>
</protein>
<feature type="chain" id="PRO_0000204101" description="ETS domain-containing transcription factor ERF">
    <location>
        <begin position="1"/>
        <end position="548"/>
    </location>
</feature>
<feature type="DNA-binding region" description="ETS" evidence="2">
    <location>
        <begin position="27"/>
        <end position="107"/>
    </location>
</feature>
<feature type="region of interest" description="Disordered" evidence="3">
    <location>
        <begin position="130"/>
        <end position="169"/>
    </location>
</feature>
<feature type="region of interest" description="Disordered" evidence="3">
    <location>
        <begin position="184"/>
        <end position="225"/>
    </location>
</feature>
<feature type="region of interest" description="Disordered" evidence="3">
    <location>
        <begin position="280"/>
        <end position="304"/>
    </location>
</feature>
<feature type="region of interest" description="Disordered" evidence="3">
    <location>
        <begin position="342"/>
        <end position="478"/>
    </location>
</feature>
<feature type="region of interest" description="Disordered" evidence="3">
    <location>
        <begin position="492"/>
        <end position="548"/>
    </location>
</feature>
<feature type="compositionally biased region" description="Gly residues" evidence="3">
    <location>
        <begin position="289"/>
        <end position="301"/>
    </location>
</feature>
<feature type="compositionally biased region" description="Pro residues" evidence="3">
    <location>
        <begin position="348"/>
        <end position="361"/>
    </location>
</feature>
<feature type="compositionally biased region" description="Low complexity" evidence="3">
    <location>
        <begin position="362"/>
        <end position="373"/>
    </location>
</feature>
<feature type="compositionally biased region" description="Low complexity" evidence="3">
    <location>
        <begin position="394"/>
        <end position="403"/>
    </location>
</feature>
<feature type="compositionally biased region" description="Acidic residues" evidence="3">
    <location>
        <begin position="431"/>
        <end position="451"/>
    </location>
</feature>
<feature type="compositionally biased region" description="Polar residues" evidence="3">
    <location>
        <begin position="532"/>
        <end position="541"/>
    </location>
</feature>
<feature type="modified residue" description="Phosphothreonine" evidence="12">
    <location>
        <position position="3"/>
    </location>
</feature>
<feature type="modified residue" description="Phosphothreonine" evidence="12">
    <location>
        <position position="7"/>
    </location>
</feature>
<feature type="modified residue" description="Phosphoserine" evidence="12">
    <location>
        <position position="20"/>
    </location>
</feature>
<feature type="modified residue" description="Phosphoserine" evidence="14">
    <location>
        <position position="24"/>
    </location>
</feature>
<feature type="modified residue" description="Phosphoserine" evidence="12 14">
    <location>
        <position position="185"/>
    </location>
</feature>
<feature type="modified residue" description="Phosphoserine" evidence="11">
    <location>
        <position position="190"/>
    </location>
</feature>
<feature type="modified residue" description="Phosphoserine" evidence="8 12 14">
    <location>
        <position position="327"/>
    </location>
</feature>
<feature type="modified residue" description="Phosphoserine" evidence="12 13">
    <location>
        <position position="431"/>
    </location>
</feature>
<feature type="modified residue" description="Phosphoserine" evidence="12">
    <location>
        <position position="435"/>
    </location>
</feature>
<feature type="modified residue" description="Phosphothreonine" evidence="12">
    <location>
        <position position="441"/>
    </location>
</feature>
<feature type="modified residue" description="Phosphoserine" evidence="12 13">
    <location>
        <position position="444"/>
    </location>
</feature>
<feature type="modified residue" description="Phosphothreonine; by MAPK1" evidence="6 13 14 15">
    <location>
        <position position="526"/>
    </location>
</feature>
<feature type="modified residue" description="Phosphoserine" evidence="12 14">
    <location>
        <position position="531"/>
    </location>
</feature>
<feature type="modified residue" description="Phosphoserine" evidence="14">
    <location>
        <position position="532"/>
    </location>
</feature>
<feature type="modified residue" description="Phosphoserine" evidence="12">
    <location>
        <position position="548"/>
    </location>
</feature>
<feature type="cross-link" description="Glycyl lysine isopeptide (Lys-Gly) (interchain with G-Cter in SUMO2)" evidence="16 17">
    <location>
        <position position="465"/>
    </location>
</feature>
<feature type="cross-link" description="Glycyl lysine isopeptide (Lys-Gly) (interchain with G-Cter in SUMO2)" evidence="17">
    <location>
        <position position="481"/>
    </location>
</feature>
<feature type="cross-link" description="Glycyl lysine isopeptide (Lys-Gly) (interchain with G-Cter in SUMO2)" evidence="16 17">
    <location>
        <position position="512"/>
    </location>
</feature>
<feature type="splice variant" id="VSP_055487" description="In isoform 2." evidence="9">
    <location>
        <begin position="1"/>
        <end position="75"/>
    </location>
</feature>
<feature type="sequence variant" id="VAR_070098" description="In CRS4; dbSNP:rs587777009." evidence="4">
    <original>R</original>
    <variation>Q</variation>
    <location>
        <position position="65"/>
    </location>
</feature>
<feature type="sequence variant" id="VAR_070099" description="In CRS4; dbSNP:rs587777008." evidence="4">
    <original>R</original>
    <variation>C</variation>
    <location>
        <position position="86"/>
    </location>
</feature>
<feature type="sequence variant" id="VAR_078043" description="In CHYTS; dbSNP:rs886041001." evidence="5">
    <original>Y</original>
    <variation>C</variation>
    <location>
        <position position="89"/>
    </location>
</feature>
<feature type="sequence variant" id="VAR_048947" description="In dbSNP:rs1053655.">
    <original>R</original>
    <variation>H</variation>
    <location>
        <position position="205"/>
    </location>
</feature>
<feature type="mutagenesis site" description="Loss of a phosphorylation site." evidence="6">
    <original>T</original>
    <variation>A</variation>
    <location>
        <position position="526"/>
    </location>
</feature>
<feature type="sequence conflict" description="In Ref. 1; AAA86686." evidence="10" ref="1">
    <original>P</original>
    <variation>R</variation>
    <location>
        <position position="381"/>
    </location>
</feature>
<feature type="sequence conflict" description="In Ref. 1; AAA86686." evidence="10" ref="1">
    <original>G</original>
    <variation>A</variation>
    <location>
        <position position="398"/>
    </location>
</feature>
<feature type="helix" evidence="18">
    <location>
        <begin position="29"/>
        <end position="37"/>
    </location>
</feature>
<feature type="helix" evidence="18">
    <location>
        <begin position="40"/>
        <end position="42"/>
    </location>
</feature>
<feature type="turn" evidence="18">
    <location>
        <begin position="43"/>
        <end position="45"/>
    </location>
</feature>
<feature type="strand" evidence="18">
    <location>
        <begin position="46"/>
        <end position="48"/>
    </location>
</feature>
<feature type="strand" evidence="18">
    <location>
        <begin position="50"/>
        <end position="58"/>
    </location>
</feature>
<feature type="helix" evidence="18">
    <location>
        <begin position="60"/>
        <end position="70"/>
    </location>
</feature>
<feature type="helix" evidence="18">
    <location>
        <begin position="78"/>
        <end position="86"/>
    </location>
</feature>
<feature type="turn" evidence="18">
    <location>
        <begin position="87"/>
        <end position="92"/>
    </location>
</feature>
<feature type="strand" evidence="18">
    <location>
        <begin position="93"/>
        <end position="96"/>
    </location>
</feature>
<feature type="strand" evidence="18">
    <location>
        <begin position="98"/>
        <end position="100"/>
    </location>
</feature>
<feature type="strand" evidence="18">
    <location>
        <begin position="103"/>
        <end position="106"/>
    </location>
</feature>
<dbReference type="EMBL" id="U15655">
    <property type="protein sequence ID" value="AAA86686.1"/>
    <property type="molecule type" value="mRNA"/>
</dbReference>
<dbReference type="EMBL" id="AK297666">
    <property type="protein sequence ID" value="BAH12646.1"/>
    <property type="molecule type" value="mRNA"/>
</dbReference>
<dbReference type="EMBL" id="AK314278">
    <property type="protein sequence ID" value="BAG36938.1"/>
    <property type="molecule type" value="mRNA"/>
</dbReference>
<dbReference type="EMBL" id="AB209271">
    <property type="protein sequence ID" value="BAD92508.1"/>
    <property type="status" value="ALT_SEQ"/>
    <property type="molecule type" value="Transcribed_RNA"/>
</dbReference>
<dbReference type="EMBL" id="AC006486">
    <property type="protein sequence ID" value="AAD11987.1"/>
    <property type="molecule type" value="Genomic_DNA"/>
</dbReference>
<dbReference type="EMBL" id="CH471126">
    <property type="protein sequence ID" value="EAW57116.1"/>
    <property type="molecule type" value="Genomic_DNA"/>
</dbReference>
<dbReference type="EMBL" id="CH471126">
    <property type="protein sequence ID" value="EAW57118.1"/>
    <property type="molecule type" value="Genomic_DNA"/>
</dbReference>
<dbReference type="EMBL" id="BC022231">
    <property type="protein sequence ID" value="AAH22231.1"/>
    <property type="molecule type" value="mRNA"/>
</dbReference>
<dbReference type="CCDS" id="CCDS12600.1">
    <molecule id="P50548-1"/>
</dbReference>
<dbReference type="CCDS" id="CCDS77308.1">
    <molecule id="P50548-2"/>
</dbReference>
<dbReference type="PIR" id="S59133">
    <property type="entry name" value="S59133"/>
</dbReference>
<dbReference type="RefSeq" id="NP_001287964.1">
    <molecule id="P50548-2"/>
    <property type="nucleotide sequence ID" value="NM_001301035.2"/>
</dbReference>
<dbReference type="RefSeq" id="NP_001295331.1">
    <molecule id="P50548-2"/>
    <property type="nucleotide sequence ID" value="NM_001308402.2"/>
</dbReference>
<dbReference type="RefSeq" id="NP_001299585.1">
    <molecule id="P50548-2"/>
    <property type="nucleotide sequence ID" value="NM_001312656.2"/>
</dbReference>
<dbReference type="RefSeq" id="NP_006485.2">
    <molecule id="P50548-1"/>
    <property type="nucleotide sequence ID" value="NM_006494.4"/>
</dbReference>
<dbReference type="RefSeq" id="XP_016881957.1">
    <property type="nucleotide sequence ID" value="XM_017026468.1"/>
</dbReference>
<dbReference type="RefSeq" id="XP_016881958.1">
    <property type="nucleotide sequence ID" value="XM_017026469.1"/>
</dbReference>
<dbReference type="RefSeq" id="XP_047294350.1">
    <molecule id="P50548-2"/>
    <property type="nucleotide sequence ID" value="XM_047438394.1"/>
</dbReference>
<dbReference type="RefSeq" id="XP_047294351.1">
    <molecule id="P50548-2"/>
    <property type="nucleotide sequence ID" value="XM_047438395.1"/>
</dbReference>
<dbReference type="PDB" id="7JSA">
    <property type="method" value="X-ray"/>
    <property type="resolution" value="2.85 A"/>
    <property type="chains" value="J=22-140"/>
</dbReference>
<dbReference type="PDB" id="7JSL">
    <property type="method" value="X-ray"/>
    <property type="resolution" value="4.51 A"/>
    <property type="chains" value="E/H/J/L=22-140"/>
</dbReference>
<dbReference type="PDBsum" id="7JSA"/>
<dbReference type="PDBsum" id="7JSL"/>
<dbReference type="SMR" id="P50548"/>
<dbReference type="BioGRID" id="108388">
    <property type="interactions" value="147"/>
</dbReference>
<dbReference type="FunCoup" id="P50548">
    <property type="interactions" value="1492"/>
</dbReference>
<dbReference type="IntAct" id="P50548">
    <property type="interactions" value="85"/>
</dbReference>
<dbReference type="MINT" id="P50548"/>
<dbReference type="STRING" id="9606.ENSP00000222329"/>
<dbReference type="iPTMnet" id="P50548"/>
<dbReference type="PhosphoSitePlus" id="P50548"/>
<dbReference type="SwissPalm" id="P50548"/>
<dbReference type="BioMuta" id="ERF"/>
<dbReference type="DMDM" id="50403684"/>
<dbReference type="jPOST" id="P50548"/>
<dbReference type="MassIVE" id="P50548"/>
<dbReference type="PaxDb" id="9606-ENSP00000222329"/>
<dbReference type="PeptideAtlas" id="P50548"/>
<dbReference type="ProteomicsDB" id="56243">
    <molecule id="P50548-1"/>
</dbReference>
<dbReference type="ProteomicsDB" id="6624"/>
<dbReference type="Pumba" id="P50548"/>
<dbReference type="Antibodypedia" id="30909">
    <property type="antibodies" value="333 antibodies from 25 providers"/>
</dbReference>
<dbReference type="DNASU" id="2077"/>
<dbReference type="Ensembl" id="ENST00000222329.9">
    <molecule id="P50548-1"/>
    <property type="protein sequence ID" value="ENSP00000222329.3"/>
    <property type="gene ID" value="ENSG00000105722.11"/>
</dbReference>
<dbReference type="Ensembl" id="ENST00000440177.6">
    <molecule id="P50548-2"/>
    <property type="protein sequence ID" value="ENSP00000388173.2"/>
    <property type="gene ID" value="ENSG00000105722.11"/>
</dbReference>
<dbReference type="GeneID" id="2077"/>
<dbReference type="KEGG" id="hsa:2077"/>
<dbReference type="MANE-Select" id="ENST00000222329.9">
    <property type="protein sequence ID" value="ENSP00000222329.3"/>
    <property type="RefSeq nucleotide sequence ID" value="NM_006494.4"/>
    <property type="RefSeq protein sequence ID" value="NP_006485.2"/>
</dbReference>
<dbReference type="UCSC" id="uc002ote.5">
    <molecule id="P50548-1"/>
    <property type="organism name" value="human"/>
</dbReference>
<dbReference type="AGR" id="HGNC:3444"/>
<dbReference type="CTD" id="2077"/>
<dbReference type="DisGeNET" id="2077"/>
<dbReference type="GeneCards" id="ERF"/>
<dbReference type="HGNC" id="HGNC:3444">
    <property type="gene designation" value="ERF"/>
</dbReference>
<dbReference type="HPA" id="ENSG00000105722">
    <property type="expression patterns" value="Low tissue specificity"/>
</dbReference>
<dbReference type="MalaCards" id="ERF"/>
<dbReference type="MIM" id="600775">
    <property type="type" value="phenotype"/>
</dbReference>
<dbReference type="MIM" id="611888">
    <property type="type" value="gene"/>
</dbReference>
<dbReference type="MIM" id="617180">
    <property type="type" value="phenotype"/>
</dbReference>
<dbReference type="neXtProt" id="NX_P50548"/>
<dbReference type="OpenTargets" id="ENSG00000105722"/>
<dbReference type="Orphanet" id="647681">
    <property type="disease" value="Craniosynostosis-facial dysmorphism-Chiari-1 malformation-developmental and language delay syndrome"/>
</dbReference>
<dbReference type="Orphanet" id="207">
    <property type="disease" value="Crouzon syndrome"/>
</dbReference>
<dbReference type="Orphanet" id="35093">
    <property type="disease" value="Non-syndromic sagittal craniosynostosis"/>
</dbReference>
<dbReference type="PharmGKB" id="PA27857"/>
<dbReference type="VEuPathDB" id="HostDB:ENSG00000105722"/>
<dbReference type="eggNOG" id="KOG3806">
    <property type="taxonomic scope" value="Eukaryota"/>
</dbReference>
<dbReference type="GeneTree" id="ENSGT00940000157292"/>
<dbReference type="HOGENOM" id="CLU_023454_0_0_1"/>
<dbReference type="InParanoid" id="P50548"/>
<dbReference type="OMA" id="GGHFRFP"/>
<dbReference type="OrthoDB" id="10067219at2759"/>
<dbReference type="PAN-GO" id="P50548">
    <property type="GO annotations" value="4 GO annotations based on evolutionary models"/>
</dbReference>
<dbReference type="PhylomeDB" id="P50548"/>
<dbReference type="TreeFam" id="TF351065"/>
<dbReference type="PathwayCommons" id="P50548"/>
<dbReference type="Reactome" id="R-HSA-2559585">
    <property type="pathway name" value="Oncogene Induced Senescence"/>
</dbReference>
<dbReference type="SignaLink" id="P50548"/>
<dbReference type="SIGNOR" id="P50548"/>
<dbReference type="BioGRID-ORCS" id="2077">
    <property type="hits" value="19 hits in 1193 CRISPR screens"/>
</dbReference>
<dbReference type="ChiTaRS" id="ERF">
    <property type="organism name" value="human"/>
</dbReference>
<dbReference type="GeneWiki" id="ERF_(gene)"/>
<dbReference type="GenomeRNAi" id="2077"/>
<dbReference type="Pharos" id="P50548">
    <property type="development level" value="Tbio"/>
</dbReference>
<dbReference type="PRO" id="PR:P50548"/>
<dbReference type="Proteomes" id="UP000005640">
    <property type="component" value="Chromosome 19"/>
</dbReference>
<dbReference type="RNAct" id="P50548">
    <property type="molecule type" value="protein"/>
</dbReference>
<dbReference type="Bgee" id="ENSG00000105722">
    <property type="expression patterns" value="Expressed in right uterine tube and 157 other cell types or tissues"/>
</dbReference>
<dbReference type="ExpressionAtlas" id="P50548">
    <property type="expression patterns" value="baseline and differential"/>
</dbReference>
<dbReference type="GO" id="GO:0000785">
    <property type="term" value="C:chromatin"/>
    <property type="evidence" value="ECO:0000247"/>
    <property type="project" value="NTNU_SB"/>
</dbReference>
<dbReference type="GO" id="GO:0005829">
    <property type="term" value="C:cytosol"/>
    <property type="evidence" value="ECO:0000314"/>
    <property type="project" value="HPA"/>
</dbReference>
<dbReference type="GO" id="GO:0005654">
    <property type="term" value="C:nucleoplasm"/>
    <property type="evidence" value="ECO:0000314"/>
    <property type="project" value="HPA"/>
</dbReference>
<dbReference type="GO" id="GO:0005634">
    <property type="term" value="C:nucleus"/>
    <property type="evidence" value="ECO:0000318"/>
    <property type="project" value="GO_Central"/>
</dbReference>
<dbReference type="GO" id="GO:0005886">
    <property type="term" value="C:plasma membrane"/>
    <property type="evidence" value="ECO:0000314"/>
    <property type="project" value="HPA"/>
</dbReference>
<dbReference type="GO" id="GO:0000981">
    <property type="term" value="F:DNA-binding transcription factor activity, RNA polymerase II-specific"/>
    <property type="evidence" value="ECO:0000247"/>
    <property type="project" value="NTNU_SB"/>
</dbReference>
<dbReference type="GO" id="GO:0001227">
    <property type="term" value="F:DNA-binding transcription repressor activity, RNA polymerase II-specific"/>
    <property type="evidence" value="ECO:0000314"/>
    <property type="project" value="GO_Central"/>
</dbReference>
<dbReference type="GO" id="GO:0043565">
    <property type="term" value="F:sequence-specific DNA binding"/>
    <property type="evidence" value="ECO:0000314"/>
    <property type="project" value="NTNU_SB"/>
</dbReference>
<dbReference type="GO" id="GO:0030154">
    <property type="term" value="P:cell differentiation"/>
    <property type="evidence" value="ECO:0000318"/>
    <property type="project" value="GO_Central"/>
</dbReference>
<dbReference type="GO" id="GO:0000122">
    <property type="term" value="P:negative regulation of transcription by RNA polymerase II"/>
    <property type="evidence" value="ECO:0000314"/>
    <property type="project" value="GO_Central"/>
</dbReference>
<dbReference type="GO" id="GO:0006357">
    <property type="term" value="P:regulation of transcription by RNA polymerase II"/>
    <property type="evidence" value="ECO:0000318"/>
    <property type="project" value="GO_Central"/>
</dbReference>
<dbReference type="FunFam" id="1.10.10.10:FF:000059">
    <property type="entry name" value="ETS translocation variant 3"/>
    <property type="match status" value="1"/>
</dbReference>
<dbReference type="Gene3D" id="1.10.10.10">
    <property type="entry name" value="Winged helix-like DNA-binding domain superfamily/Winged helix DNA-binding domain"/>
    <property type="match status" value="1"/>
</dbReference>
<dbReference type="InterPro" id="IPR000418">
    <property type="entry name" value="Ets_dom"/>
</dbReference>
<dbReference type="InterPro" id="IPR046328">
    <property type="entry name" value="ETS_fam"/>
</dbReference>
<dbReference type="InterPro" id="IPR036388">
    <property type="entry name" value="WH-like_DNA-bd_sf"/>
</dbReference>
<dbReference type="InterPro" id="IPR036390">
    <property type="entry name" value="WH_DNA-bd_sf"/>
</dbReference>
<dbReference type="PANTHER" id="PTHR11849">
    <property type="entry name" value="ETS"/>
    <property type="match status" value="1"/>
</dbReference>
<dbReference type="PANTHER" id="PTHR11849:SF31">
    <property type="entry name" value="ETS DOMAIN-CONTAINING TRANSCRIPTION FACTOR ERF"/>
    <property type="match status" value="1"/>
</dbReference>
<dbReference type="Pfam" id="PF00178">
    <property type="entry name" value="Ets"/>
    <property type="match status" value="1"/>
</dbReference>
<dbReference type="PRINTS" id="PR00454">
    <property type="entry name" value="ETSDOMAIN"/>
</dbReference>
<dbReference type="SMART" id="SM00413">
    <property type="entry name" value="ETS"/>
    <property type="match status" value="1"/>
</dbReference>
<dbReference type="SUPFAM" id="SSF46785">
    <property type="entry name" value="Winged helix' DNA-binding domain"/>
    <property type="match status" value="1"/>
</dbReference>
<dbReference type="PROSITE" id="PS00345">
    <property type="entry name" value="ETS_DOMAIN_1"/>
    <property type="match status" value="1"/>
</dbReference>
<dbReference type="PROSITE" id="PS00346">
    <property type="entry name" value="ETS_DOMAIN_2"/>
    <property type="match status" value="1"/>
</dbReference>
<dbReference type="PROSITE" id="PS50061">
    <property type="entry name" value="ETS_DOMAIN_3"/>
    <property type="match status" value="1"/>
</dbReference>